<protein>
    <recommendedName>
        <fullName evidence="2">Virion infectivity factor</fullName>
        <shortName evidence="2">Vif</shortName>
    </recommendedName>
    <alternativeName>
        <fullName evidence="2">SOR protein</fullName>
    </alternativeName>
    <component>
        <recommendedName>
            <fullName evidence="2">p17</fullName>
        </recommendedName>
    </component>
    <component>
        <recommendedName>
            <fullName evidence="2">p7</fullName>
        </recommendedName>
    </component>
</protein>
<reference key="1">
    <citation type="journal article" date="2000" name="AIDS Res. Hum. Retroviruses">
        <title>Near-full-length genome sequencing of divergent African HIV type 1 subtype F viruses leads to the identification of a new HIV type 1 subtype designated K.</title>
        <authorList>
            <person name="Triques K."/>
            <person name="Bourgeois A."/>
            <person name="Vidale N."/>
            <person name="Mpoudi-Ngole E."/>
            <person name="Mulanga-Kabeya C."/>
            <person name="Nzilambi N."/>
            <person name="Torimiro N."/>
            <person name="Saman E."/>
            <person name="Delaporte E."/>
            <person name="Peeters M."/>
        </authorList>
    </citation>
    <scope>NUCLEOTIDE SEQUENCE [GENOMIC RNA]</scope>
</reference>
<evidence type="ECO:0000250" key="1">
    <source>
        <dbReference type="UniProtKB" id="O70897"/>
    </source>
</evidence>
<evidence type="ECO:0000255" key="2">
    <source>
        <dbReference type="HAMAP-Rule" id="MF_04081"/>
    </source>
</evidence>
<evidence type="ECO:0000256" key="3">
    <source>
        <dbReference type="SAM" id="MobiDB-lite"/>
    </source>
</evidence>
<organism>
    <name type="scientific">Human immunodeficiency virus type 1 group M subtype K (isolate 97ZR-EQTB11)</name>
    <name type="common">HIV-1</name>
    <dbReference type="NCBI Taxonomy" id="388907"/>
    <lineage>
        <taxon>Viruses</taxon>
        <taxon>Riboviria</taxon>
        <taxon>Pararnavirae</taxon>
        <taxon>Artverviricota</taxon>
        <taxon>Revtraviricetes</taxon>
        <taxon>Ortervirales</taxon>
        <taxon>Retroviridae</taxon>
        <taxon>Orthoretrovirinae</taxon>
        <taxon>Lentivirus</taxon>
        <taxon>Human immunodeficiency virus type 1</taxon>
    </lineage>
</organism>
<gene>
    <name evidence="2" type="primary">vif</name>
</gene>
<dbReference type="EMBL" id="AJ249235">
    <property type="status" value="NOT_ANNOTATED_CDS"/>
    <property type="molecule type" value="Genomic_RNA"/>
</dbReference>
<dbReference type="SMR" id="P0C1K6"/>
<dbReference type="Proteomes" id="UP000100183">
    <property type="component" value="Segment"/>
</dbReference>
<dbReference type="GO" id="GO:0030430">
    <property type="term" value="C:host cell cytoplasm"/>
    <property type="evidence" value="ECO:0007669"/>
    <property type="project" value="UniProtKB-SubCell"/>
</dbReference>
<dbReference type="GO" id="GO:0020002">
    <property type="term" value="C:host cell plasma membrane"/>
    <property type="evidence" value="ECO:0007669"/>
    <property type="project" value="UniProtKB-SubCell"/>
</dbReference>
<dbReference type="GO" id="GO:0016020">
    <property type="term" value="C:membrane"/>
    <property type="evidence" value="ECO:0007669"/>
    <property type="project" value="UniProtKB-UniRule"/>
</dbReference>
<dbReference type="GO" id="GO:0044423">
    <property type="term" value="C:virion component"/>
    <property type="evidence" value="ECO:0007669"/>
    <property type="project" value="UniProtKB-UniRule"/>
</dbReference>
<dbReference type="GO" id="GO:0046872">
    <property type="term" value="F:metal ion binding"/>
    <property type="evidence" value="ECO:0007669"/>
    <property type="project" value="UniProtKB-KW"/>
</dbReference>
<dbReference type="GO" id="GO:0003723">
    <property type="term" value="F:RNA binding"/>
    <property type="evidence" value="ECO:0007669"/>
    <property type="project" value="UniProtKB-UniRule"/>
</dbReference>
<dbReference type="GO" id="GO:0019058">
    <property type="term" value="P:viral life cycle"/>
    <property type="evidence" value="ECO:0007669"/>
    <property type="project" value="InterPro"/>
</dbReference>
<dbReference type="HAMAP" id="MF_04081">
    <property type="entry name" value="HIV_VIF"/>
    <property type="match status" value="1"/>
</dbReference>
<dbReference type="InterPro" id="IPR000475">
    <property type="entry name" value="Vif"/>
</dbReference>
<dbReference type="Pfam" id="PF00559">
    <property type="entry name" value="Vif"/>
    <property type="match status" value="1"/>
</dbReference>
<dbReference type="PRINTS" id="PR00349">
    <property type="entry name" value="VIRIONINFFCT"/>
</dbReference>
<comment type="function">
    <text evidence="2">Counteracts the innate antiviral activity of host APOBEC3F and APOBEC3G by promoting their ubiquitination and degradation. Acts as a substrate recognition component of an E3 ubiquitin-protein ligase complex: mechanistically, Vif hijacks a host cullin-5-RING E3 ubiquitin-protein ligase complex (ECS complex) and the transcription coactivator CBFB/CBF-beta to form an active E3 ubiquitin-protein ligase complex that targets APOBEC3G and APOBEC3F for polyubiquitination, leading to their degradation by the proteasome. Vif interaction with APOBEC3G also blocks its cytidine deaminase activity in a proteasome-independent manner, suggesting a dual inhibitory mechanism. May interact directly with APOBEC3G mRNA in order to inhibit its translation. Association with CBFB/CBF-beta also inhibits the transcription coactivator activity of CBFB/CBF-beta. Seems to play a role in viral morphology by affecting the stability of the viral nucleoprotein core. Finally, Vif also contributes to the G2 cell cycle arrest observed in HIV infected cells.</text>
</comment>
<comment type="subunit">
    <text evidence="1">Homomultimer; in vitro and presumably in vivo. Interacts with viral RNA and Pr55Gag precursor; these interactions mediate Vif incorporation into the virion. Interacts with the viral reverse transcriptase. Forms cullin-5-RING E3 ubiquitin-protein ligase complex (ECS complex) by interacting with host CUL5, RBX2, elongin BC complex (ELOB and ELOC) and CBFB/CBF-beta. Within the ECS complex, Vif interacts directly with host CUL5, ELOC and APOBEC (APOBEC3F and APOBEC3G) substrates. The ECS complex also contains some single-stranded RNA (ssRNA) that acts as a glue that bridges Vif with APOBEC (APOBEC3F and APOBEC3G) substrates. Interacts with host UBCE7IP1 isoform 3/ZIN and possibly with SAT. Interacts with host tyrosine kinases HCK and FYN; these interactions may decrease level of phosphorylated APOBEC3G incorporation into virions. Interacts with host ABCE1; this interaction may play a role in protecting viral RNA from damage during viral assembly. Interacts with host MDM2; this interaction targets Vif for degradation by the proteasome.</text>
</comment>
<comment type="subcellular location">
    <subcellularLocation>
        <location evidence="2">Host cytoplasm</location>
    </subcellularLocation>
    <subcellularLocation>
        <location evidence="2">Host cell membrane</location>
        <topology evidence="2">Peripheral membrane protein</topology>
        <orientation evidence="2">Cytoplasmic side</orientation>
    </subcellularLocation>
    <subcellularLocation>
        <location evidence="2">Virion</location>
    </subcellularLocation>
    <text evidence="2">In the cytoplasm, seems to colocalize with intermediate filament vimentin. A fraction is associated with the cytoplasmic side of cellular membranes, presumably via the interaction with Pr55Gag precursor. Incorporated in virions at a ratio of approximately 7 to 20 molecules per virion.</text>
</comment>
<comment type="induction">
    <text evidence="2">Expressed late during infection in a Rev-dependent manner.</text>
</comment>
<comment type="domain">
    <text evidence="2">The BC-like-box motif mediates the interaction with elongin BC complex.</text>
</comment>
<comment type="domain">
    <text evidence="2">The HCCH motif (H-x(5)-C-x(18)-C-x(5)-H) mediates the interaction with CUL5.</text>
</comment>
<comment type="PTM">
    <text evidence="2">Processed in virion by the viral protease.</text>
</comment>
<comment type="PTM">
    <text evidence="2">Highly phosphorylated on serine and threonine residues.</text>
</comment>
<comment type="PTM">
    <text evidence="2">Polyubiquitinated and degraded by the proteasome in the presence of APOBEC3G.</text>
</comment>
<comment type="miscellaneous">
    <text evidence="2">Vif-defective viruses show catastrophic failure in reverse transcription due to APOBEC-induced mutations that initiate a DNA base repair pathway and compromise the structural integrity of the ssDNA. In the absence of Vif, the virion is morphologically abnormal.</text>
</comment>
<comment type="miscellaneous">
    <text evidence="2">HIV-1 lineages are divided in three main groups, M (for Major), O (for Outlier), and N (for New, or Non-M, Non-O). The vast majority of strains found worldwide belong to the group M. Group O seems to be endemic to and largely confined to Cameroon and neighboring countries in West Central Africa, where these viruses represent a small minority of HIV-1 strains. The group N is represented by a limited number of isolates from Cameroonian persons. The group M is further subdivided in 9 clades or subtypes (A to D, F to H, J and K).</text>
</comment>
<comment type="miscellaneous">
    <text evidence="2">Required for replication in 'nonpermissive' cells, including primary T-cells, macrophages and certain T-cell lines, but is dispensable for replication in 'permissive' cell lines, such as 293T cells. In nonpermissive cells, Vif-defective viruses can produce virions, but they fail to complete reverse transcription and cannot successfully infect new cells.</text>
</comment>
<comment type="similarity">
    <text evidence="2">Belongs to the primate lentivirus group Vif protein family.</text>
</comment>
<proteinExistence type="inferred from homology"/>
<accession>P0C1K6</accession>
<keyword id="KW-0014">AIDS</keyword>
<keyword id="KW-1032">Host cell membrane</keyword>
<keyword id="KW-1035">Host cytoplasm</keyword>
<keyword id="KW-1043">Host membrane</keyword>
<keyword id="KW-0945">Host-virus interaction</keyword>
<keyword id="KW-0472">Membrane</keyword>
<keyword id="KW-0479">Metal-binding</keyword>
<keyword id="KW-0597">Phosphoprotein</keyword>
<keyword id="KW-0694">RNA-binding</keyword>
<keyword id="KW-0832">Ubl conjugation</keyword>
<keyword id="KW-0833">Ubl conjugation pathway</keyword>
<keyword id="KW-0946">Virion</keyword>
<keyword id="KW-0862">Zinc</keyword>
<organismHost>
    <name type="scientific">Homo sapiens</name>
    <name type="common">Human</name>
    <dbReference type="NCBI Taxonomy" id="9606"/>
</organismHost>
<feature type="chain" id="PRO_0000245117" description="Virion infectivity factor" evidence="2">
    <location>
        <begin position="1"/>
        <end position="192"/>
    </location>
</feature>
<feature type="chain" id="PRO_0000245118" description="p17" evidence="2">
    <location>
        <begin position="1"/>
        <end position="150"/>
    </location>
</feature>
<feature type="chain" id="PRO_0000245119" description="p7" evidence="2">
    <location>
        <begin position="151"/>
        <end position="192"/>
    </location>
</feature>
<feature type="region of interest" description="Interaction with host APOBEC3F; F1-box" evidence="2">
    <location>
        <begin position="14"/>
        <end position="17"/>
    </location>
</feature>
<feature type="region of interest" description="Interaction with host APOBEC3G; G-box" evidence="2">
    <location>
        <begin position="40"/>
        <end position="44"/>
    </location>
</feature>
<feature type="region of interest" description="Interaction with host APOBEC3F and APOBEC3G; FG-box" evidence="2">
    <location>
        <begin position="54"/>
        <end position="72"/>
    </location>
</feature>
<feature type="region of interest" description="Interaction with host APOBEC3F; F2-box" evidence="2">
    <location>
        <begin position="74"/>
        <end position="79"/>
    </location>
</feature>
<feature type="region of interest" description="RNA-binding" evidence="2">
    <location>
        <begin position="75"/>
        <end position="114"/>
    </location>
</feature>
<feature type="region of interest" description="SOCS box-like" evidence="2">
    <location>
        <begin position="151"/>
        <end position="180"/>
    </location>
</feature>
<feature type="region of interest" description="Multimerization" evidence="2">
    <location>
        <begin position="151"/>
        <end position="164"/>
    </location>
</feature>
<feature type="region of interest" description="Disordered" evidence="3">
    <location>
        <begin position="161"/>
        <end position="192"/>
    </location>
</feature>
<feature type="region of interest" description="Membrane association" evidence="2">
    <location>
        <begin position="171"/>
        <end position="172"/>
    </location>
</feature>
<feature type="short sequence motif" description="HCCH motif" evidence="2">
    <location>
        <begin position="108"/>
        <end position="139"/>
    </location>
</feature>
<feature type="short sequence motif" description="BC-box-like motif" evidence="2">
    <location>
        <begin position="144"/>
        <end position="153"/>
    </location>
</feature>
<feature type="compositionally biased region" description="Basic residues" evidence="3">
    <location>
        <begin position="176"/>
        <end position="186"/>
    </location>
</feature>
<feature type="binding site" evidence="2">
    <location>
        <position position="108"/>
    </location>
    <ligand>
        <name>Zn(2+)</name>
        <dbReference type="ChEBI" id="CHEBI:29105"/>
    </ligand>
</feature>
<feature type="binding site" evidence="2">
    <location>
        <position position="114"/>
    </location>
    <ligand>
        <name>Zn(2+)</name>
        <dbReference type="ChEBI" id="CHEBI:29105"/>
    </ligand>
</feature>
<feature type="binding site" evidence="2">
    <location>
        <position position="133"/>
    </location>
    <ligand>
        <name>Zn(2+)</name>
        <dbReference type="ChEBI" id="CHEBI:29105"/>
    </ligand>
</feature>
<feature type="binding site" evidence="2">
    <location>
        <position position="139"/>
    </location>
    <ligand>
        <name>Zn(2+)</name>
        <dbReference type="ChEBI" id="CHEBI:29105"/>
    </ligand>
</feature>
<feature type="site" description="Cleavage in virion (by viral protease)" evidence="2">
    <location>
        <begin position="150"/>
        <end position="151"/>
    </location>
</feature>
<feature type="modified residue" description="Phosphothreonine; by host MAP4K1" evidence="2">
    <location>
        <position position="96"/>
    </location>
</feature>
<feature type="modified residue" description="Phosphoserine; by host" evidence="2">
    <location>
        <position position="144"/>
    </location>
</feature>
<feature type="modified residue" description="Phosphoserine; by host MAP4K1" evidence="2">
    <location>
        <position position="165"/>
    </location>
</feature>
<feature type="modified residue" description="Phosphothreonine; by host" evidence="2">
    <location>
        <position position="188"/>
    </location>
</feature>
<name>VIF_HV197</name>
<sequence length="192" mass="22571">MENRWQVMIVWQVDRMRINTWKSLVKYHMYVSKKANRWRYRHHYDSNHPKISSEVHIPLGDAELVVTTYWGLHTGEREWHLGQGVSIEWRLKKYRTQVDPGLADQLIHIYYFDCFSESAIRKALLGHRVSPRCEYQAGHTQVGSLQYLALTALIAPKKTKPPVPSVQKLVEDRWNKPQKTRGHRGSHTMSGQ</sequence>